<comment type="function">
    <text evidence="1">Involved in the biosynthesis of the antifungal agent validamycin A. Catalyzes the phosphorylation of valienone and validone to their 7-phosphate derivatives.</text>
</comment>
<comment type="catalytic activity">
    <reaction evidence="1">
        <text>valienone + ATP = valienone 7-phosphate + ADP + H(+)</text>
        <dbReference type="Rhea" id="RHEA:49420"/>
        <dbReference type="ChEBI" id="CHEBI:15378"/>
        <dbReference type="ChEBI" id="CHEBI:30616"/>
        <dbReference type="ChEBI" id="CHEBI:111521"/>
        <dbReference type="ChEBI" id="CHEBI:111522"/>
        <dbReference type="ChEBI" id="CHEBI:456216"/>
        <dbReference type="EC" id="2.7.1.214"/>
    </reaction>
</comment>
<comment type="catalytic activity">
    <reaction evidence="1">
        <text>validone + ATP = validone 7-phosphate + ADP + H(+)</text>
        <dbReference type="Rhea" id="RHEA:49424"/>
        <dbReference type="ChEBI" id="CHEBI:15378"/>
        <dbReference type="ChEBI" id="CHEBI:30616"/>
        <dbReference type="ChEBI" id="CHEBI:111523"/>
        <dbReference type="ChEBI" id="CHEBI:111542"/>
        <dbReference type="ChEBI" id="CHEBI:456216"/>
        <dbReference type="EC" id="2.7.1.214"/>
    </reaction>
</comment>
<comment type="biophysicochemical properties">
    <kinetics>
        <KM evidence="1">19 uM for valienone</KM>
        <KM evidence="1">26 uM for validone</KM>
        <text evidence="1">kcat is 7.3 sec(-1) for validone as substrate. kcat is 3.5 sec(-1) for valienone as substrate.</text>
    </kinetics>
</comment>
<comment type="disruption phenotype">
    <text evidence="1">Cells lacking this gene are unable to procduce validamycin A.</text>
</comment>
<comment type="similarity">
    <text evidence="4">Belongs to the ROK (NagC/XylR) family.</text>
</comment>
<protein>
    <recommendedName>
        <fullName evidence="3">C(7)-cyclitol 7-kinase</fullName>
        <ecNumber evidence="1">2.7.1.214</ecNumber>
    </recommendedName>
</protein>
<proteinExistence type="evidence at protein level"/>
<keyword id="KW-0045">Antibiotic biosynthesis</keyword>
<keyword id="KW-0418">Kinase</keyword>
<keyword id="KW-0808">Transferase</keyword>
<gene>
    <name evidence="2" type="primary">valC</name>
</gene>
<organism>
    <name type="scientific">Streptomyces hygroscopicus subsp. jinggangensis (strain 5008)</name>
    <dbReference type="NCBI Taxonomy" id="1133850"/>
    <lineage>
        <taxon>Bacteria</taxon>
        <taxon>Bacillati</taxon>
        <taxon>Actinomycetota</taxon>
        <taxon>Actinomycetes</taxon>
        <taxon>Kitasatosporales</taxon>
        <taxon>Streptomycetaceae</taxon>
        <taxon>Streptomyces</taxon>
        <taxon>Streptomyces violaceusniger group</taxon>
    </lineage>
</organism>
<evidence type="ECO:0000269" key="1">
    <source>
    </source>
</evidence>
<evidence type="ECO:0000303" key="2">
    <source>
    </source>
</evidence>
<evidence type="ECO:0000303" key="3">
    <source>
    </source>
</evidence>
<evidence type="ECO:0000305" key="4"/>
<evidence type="ECO:0000312" key="5">
    <source>
        <dbReference type="EMBL" id="AAW88571.1"/>
    </source>
</evidence>
<evidence type="ECO:0000312" key="6">
    <source>
        <dbReference type="EMBL" id="ABA41526.1"/>
    </source>
</evidence>
<feature type="chain" id="PRO_0000443533" description="C(7)-cyclitol 7-kinase">
    <location>
        <begin position="1"/>
        <end position="351"/>
    </location>
</feature>
<dbReference type="EC" id="2.7.1.214" evidence="1"/>
<dbReference type="EMBL" id="AY753181">
    <property type="protein sequence ID" value="AAW88571.1"/>
    <property type="molecule type" value="Genomic_DNA"/>
</dbReference>
<dbReference type="EMBL" id="DQ164098">
    <property type="protein sequence ID" value="ABA41526.1"/>
    <property type="molecule type" value="Genomic_DNA"/>
</dbReference>
<dbReference type="SMR" id="Q3T6E2"/>
<dbReference type="STRING" id="1133850.SHJG_0278"/>
<dbReference type="KEGG" id="shy:SHJG_0278"/>
<dbReference type="OrthoDB" id="8772678at2"/>
<dbReference type="BioCyc" id="MetaCyc:MONOMER-13773"/>
<dbReference type="BRENDA" id="2.7.1.214">
    <property type="organism ID" value="14749"/>
</dbReference>
<dbReference type="GO" id="GO:0016301">
    <property type="term" value="F:kinase activity"/>
    <property type="evidence" value="ECO:0007669"/>
    <property type="project" value="UniProtKB-KW"/>
</dbReference>
<dbReference type="GO" id="GO:0017000">
    <property type="term" value="P:antibiotic biosynthetic process"/>
    <property type="evidence" value="ECO:0007669"/>
    <property type="project" value="UniProtKB-KW"/>
</dbReference>
<dbReference type="Gene3D" id="3.30.420.40">
    <property type="match status" value="2"/>
</dbReference>
<dbReference type="InterPro" id="IPR043129">
    <property type="entry name" value="ATPase_NBD"/>
</dbReference>
<dbReference type="InterPro" id="IPR000600">
    <property type="entry name" value="ROK"/>
</dbReference>
<dbReference type="PANTHER" id="PTHR18964:SF149">
    <property type="entry name" value="BIFUNCTIONAL UDP-N-ACETYLGLUCOSAMINE 2-EPIMERASE_N-ACETYLMANNOSAMINE KINASE"/>
    <property type="match status" value="1"/>
</dbReference>
<dbReference type="PANTHER" id="PTHR18964">
    <property type="entry name" value="ROK (REPRESSOR, ORF, KINASE) FAMILY"/>
    <property type="match status" value="1"/>
</dbReference>
<dbReference type="Pfam" id="PF00480">
    <property type="entry name" value="ROK"/>
    <property type="match status" value="1"/>
</dbReference>
<dbReference type="SUPFAM" id="SSF53067">
    <property type="entry name" value="Actin-like ATPase domain"/>
    <property type="match status" value="1"/>
</dbReference>
<name>VALC_STRHJ</name>
<sequence length="351" mass="35966">MTALTLAPCDLVVADLGGTTLRVGRITAGTSEVHDVKRVPTNGLGRYGALAPQELQDRVMEQLTREIAAHLTRPGQAPAQAVAVSFAGPMTADGVVLAGPTLWGGPAAPLPVADVLTQRLGLPVVAANDVTAAAWRYAAAEPEPFCLTTVSSGIGNKVFRHGEIVIDQLGYGGEIGHWLVDHAEDAAPCECGGRGHLGAIASGRGALFAVRAAAAADASAFARSALAGPSGGVPEAITNEAFAAAARAGDTFARESLRRSLRPLASAVSLLFTAIGVRRYLFVGGFALALGDTFLTLLGDELVRVGCFGLDEYATRAMLALGEDDDDHCLIGIGQLAAARLGAPRAVEVTA</sequence>
<accession>Q3T6E2</accession>
<reference key="1">
    <citation type="journal article" date="2005" name="Appl. Environ. Microbiol.">
        <title>Gene cluster responsible for validamycin biosynthesis in Streptomyces hygroscopicus subsp. jinggangensis 5008.</title>
        <authorList>
            <person name="Yu Y."/>
            <person name="Bai L."/>
            <person name="Minagawa K."/>
            <person name="Jian X."/>
            <person name="Li L."/>
            <person name="Li J."/>
            <person name="Chen S."/>
            <person name="Cao E."/>
            <person name="Mahmud T."/>
            <person name="Floss H.G."/>
            <person name="Zhou X."/>
            <person name="Deng Z."/>
        </authorList>
    </citation>
    <scope>NUCLEOTIDE SEQUENCE [GENOMIC DNA]</scope>
    <source>
        <strain evidence="5">5008</strain>
    </source>
</reference>
<reference key="2">
    <citation type="journal article" date="2006" name="Chem. Biol.">
        <title>Functional analysis of the validamycin biosynthetic gene cluster and engineered production of validoxylamine A.</title>
        <authorList>
            <person name="Bai L."/>
            <person name="Li L."/>
            <person name="Xu H."/>
            <person name="Minagawa K."/>
            <person name="Yu Y."/>
            <person name="Zhang Y."/>
            <person name="Zhou X."/>
            <person name="Floss H.G."/>
            <person name="Mahmud T."/>
            <person name="Deng Z."/>
        </authorList>
    </citation>
    <scope>NUCLEOTIDE SEQUENCE [GENOMIC DNA]</scope>
    <source>
        <strain evidence="6">5008</strain>
    </source>
</reference>
<reference key="3">
    <citation type="journal article" date="2007" name="ChemBioChem">
        <title>ValC, a new type of C7-cyclitol kinase involved in the biosynthesis of the antifungal agent validamycin A.</title>
        <authorList>
            <person name="Minagawa K."/>
            <person name="Zhang Y."/>
            <person name="Ito T."/>
            <person name="Bai L."/>
            <person name="Deng Z."/>
            <person name="Mahmud T."/>
        </authorList>
    </citation>
    <scope>FUNCTION</scope>
    <scope>CATALYTIC ACTIVITY</scope>
    <scope>BIOPHYSICOCHEMICAL PROPERTIES</scope>
    <scope>DISRUPTION PHENOTYPE</scope>
    <source>
        <strain>5008</strain>
    </source>
</reference>